<reference key="1">
    <citation type="journal article" date="2009" name="Nat. Genet.">
        <title>Comparative genomic and phylogeographic analysis of Mycobacterium leprae.</title>
        <authorList>
            <person name="Monot M."/>
            <person name="Honore N."/>
            <person name="Garnier T."/>
            <person name="Zidane N."/>
            <person name="Sherafi D."/>
            <person name="Paniz-Mondolfi A."/>
            <person name="Matsuoka M."/>
            <person name="Taylor G.M."/>
            <person name="Donoghue H.D."/>
            <person name="Bouwman A."/>
            <person name="Mays S."/>
            <person name="Watson C."/>
            <person name="Lockwood D."/>
            <person name="Khamispour A."/>
            <person name="Dowlati Y."/>
            <person name="Jianping S."/>
            <person name="Rea T.H."/>
            <person name="Vera-Cabrera L."/>
            <person name="Stefani M.M."/>
            <person name="Banu S."/>
            <person name="Macdonald M."/>
            <person name="Sapkota B.R."/>
            <person name="Spencer J.S."/>
            <person name="Thomas J."/>
            <person name="Harshman K."/>
            <person name="Singh P."/>
            <person name="Busso P."/>
            <person name="Gattiker A."/>
            <person name="Rougemont J."/>
            <person name="Brennan P.J."/>
            <person name="Cole S.T."/>
        </authorList>
    </citation>
    <scope>NUCLEOTIDE SEQUENCE [LARGE SCALE GENOMIC DNA]</scope>
    <source>
        <strain>Br4923</strain>
    </source>
</reference>
<dbReference type="EC" id="6.3.3.3" evidence="1"/>
<dbReference type="EMBL" id="FM211192">
    <property type="protein sequence ID" value="CAR71313.1"/>
    <property type="molecule type" value="Genomic_DNA"/>
</dbReference>
<dbReference type="SMR" id="B8ZR85"/>
<dbReference type="KEGG" id="mlb:MLBr01218"/>
<dbReference type="HOGENOM" id="CLU_072551_1_0_11"/>
<dbReference type="UniPathway" id="UPA00078">
    <property type="reaction ID" value="UER00161"/>
</dbReference>
<dbReference type="Proteomes" id="UP000006900">
    <property type="component" value="Chromosome"/>
</dbReference>
<dbReference type="GO" id="GO:0005829">
    <property type="term" value="C:cytosol"/>
    <property type="evidence" value="ECO:0007669"/>
    <property type="project" value="TreeGrafter"/>
</dbReference>
<dbReference type="GO" id="GO:0005524">
    <property type="term" value="F:ATP binding"/>
    <property type="evidence" value="ECO:0007669"/>
    <property type="project" value="UniProtKB-UniRule"/>
</dbReference>
<dbReference type="GO" id="GO:0004141">
    <property type="term" value="F:dethiobiotin synthase activity"/>
    <property type="evidence" value="ECO:0007669"/>
    <property type="project" value="UniProtKB-UniRule"/>
</dbReference>
<dbReference type="GO" id="GO:0000287">
    <property type="term" value="F:magnesium ion binding"/>
    <property type="evidence" value="ECO:0007669"/>
    <property type="project" value="UniProtKB-UniRule"/>
</dbReference>
<dbReference type="GO" id="GO:0009102">
    <property type="term" value="P:biotin biosynthetic process"/>
    <property type="evidence" value="ECO:0007669"/>
    <property type="project" value="UniProtKB-UniRule"/>
</dbReference>
<dbReference type="CDD" id="cd03109">
    <property type="entry name" value="DTBS"/>
    <property type="match status" value="1"/>
</dbReference>
<dbReference type="FunFam" id="3.40.50.300:FF:002079">
    <property type="entry name" value="ATP-dependent dethiobiotin synthetase BioD"/>
    <property type="match status" value="1"/>
</dbReference>
<dbReference type="Gene3D" id="3.40.50.300">
    <property type="entry name" value="P-loop containing nucleotide triphosphate hydrolases"/>
    <property type="match status" value="1"/>
</dbReference>
<dbReference type="HAMAP" id="MF_00336">
    <property type="entry name" value="BioD"/>
    <property type="match status" value="1"/>
</dbReference>
<dbReference type="InterPro" id="IPR004472">
    <property type="entry name" value="DTB_synth_BioD"/>
</dbReference>
<dbReference type="InterPro" id="IPR027417">
    <property type="entry name" value="P-loop_NTPase"/>
</dbReference>
<dbReference type="NCBIfam" id="TIGR00347">
    <property type="entry name" value="bioD"/>
    <property type="match status" value="1"/>
</dbReference>
<dbReference type="PANTHER" id="PTHR43210">
    <property type="entry name" value="DETHIOBIOTIN SYNTHETASE"/>
    <property type="match status" value="1"/>
</dbReference>
<dbReference type="PANTHER" id="PTHR43210:SF5">
    <property type="entry name" value="DETHIOBIOTIN SYNTHETASE"/>
    <property type="match status" value="1"/>
</dbReference>
<dbReference type="Pfam" id="PF13500">
    <property type="entry name" value="AAA_26"/>
    <property type="match status" value="1"/>
</dbReference>
<dbReference type="SUPFAM" id="SSF52540">
    <property type="entry name" value="P-loop containing nucleoside triphosphate hydrolases"/>
    <property type="match status" value="1"/>
</dbReference>
<gene>
    <name evidence="1" type="primary">bioD</name>
    <name type="ordered locus">MLBr01218</name>
</gene>
<comment type="function">
    <text evidence="1">Catalyzes a mechanistically unusual reaction, the ATP-dependent insertion of CO2 between the N7 and N8 nitrogen atoms of 7,8-diaminopelargonic acid (DAPA, also called 7,8-diammoniononanoate) to form a ureido ring.</text>
</comment>
<comment type="catalytic activity">
    <reaction evidence="1">
        <text>(7R,8S)-7,8-diammoniononanoate + CO2 + ATP = (4R,5S)-dethiobiotin + ADP + phosphate + 3 H(+)</text>
        <dbReference type="Rhea" id="RHEA:15805"/>
        <dbReference type="ChEBI" id="CHEBI:15378"/>
        <dbReference type="ChEBI" id="CHEBI:16526"/>
        <dbReference type="ChEBI" id="CHEBI:30616"/>
        <dbReference type="ChEBI" id="CHEBI:43474"/>
        <dbReference type="ChEBI" id="CHEBI:149469"/>
        <dbReference type="ChEBI" id="CHEBI:149473"/>
        <dbReference type="ChEBI" id="CHEBI:456216"/>
        <dbReference type="EC" id="6.3.3.3"/>
    </reaction>
</comment>
<comment type="cofactor">
    <cofactor evidence="1">
        <name>Mg(2+)</name>
        <dbReference type="ChEBI" id="CHEBI:18420"/>
    </cofactor>
</comment>
<comment type="pathway">
    <text evidence="1">Cofactor biosynthesis; biotin biosynthesis; biotin from 7,8-diaminononanoate: step 1/2.</text>
</comment>
<comment type="subunit">
    <text evidence="1">Homodimer.</text>
</comment>
<comment type="subcellular location">
    <subcellularLocation>
        <location evidence="1">Cytoplasm</location>
    </subcellularLocation>
</comment>
<comment type="similarity">
    <text evidence="1">Belongs to the dethiobiotin synthetase family.</text>
</comment>
<accession>B8ZR85</accession>
<organism>
    <name type="scientific">Mycobacterium leprae (strain Br4923)</name>
    <dbReference type="NCBI Taxonomy" id="561304"/>
    <lineage>
        <taxon>Bacteria</taxon>
        <taxon>Bacillati</taxon>
        <taxon>Actinomycetota</taxon>
        <taxon>Actinomycetes</taxon>
        <taxon>Mycobacteriales</taxon>
        <taxon>Mycobacteriaceae</taxon>
        <taxon>Mycobacterium</taxon>
    </lineage>
</organism>
<keyword id="KW-0067">ATP-binding</keyword>
<keyword id="KW-0093">Biotin biosynthesis</keyword>
<keyword id="KW-0963">Cytoplasm</keyword>
<keyword id="KW-0436">Ligase</keyword>
<keyword id="KW-0460">Magnesium</keyword>
<keyword id="KW-0479">Metal-binding</keyword>
<keyword id="KW-0547">Nucleotide-binding</keyword>
<protein>
    <recommendedName>
        <fullName evidence="1">ATP-dependent dethiobiotin synthetase BioD</fullName>
        <ecNumber evidence="1">6.3.3.3</ecNumber>
    </recommendedName>
    <alternativeName>
        <fullName evidence="1">DTB synthetase</fullName>
        <shortName evidence="1">DTBS</shortName>
    </alternativeName>
    <alternativeName>
        <fullName evidence="1">Dethiobiotin synthase</fullName>
    </alternativeName>
</protein>
<feature type="chain" id="PRO_1000133216" description="ATP-dependent dethiobiotin synthetase BioD">
    <location>
        <begin position="1"/>
        <end position="226"/>
    </location>
</feature>
<feature type="active site" evidence="1">
    <location>
        <position position="37"/>
    </location>
</feature>
<feature type="binding site" evidence="1">
    <location>
        <begin position="12"/>
        <end position="17"/>
    </location>
    <ligand>
        <name>ATP</name>
        <dbReference type="ChEBI" id="CHEBI:30616"/>
    </ligand>
</feature>
<feature type="binding site" evidence="1">
    <location>
        <position position="16"/>
    </location>
    <ligand>
        <name>Mg(2+)</name>
        <dbReference type="ChEBI" id="CHEBI:18420"/>
    </ligand>
</feature>
<feature type="binding site" evidence="1">
    <location>
        <position position="41"/>
    </location>
    <ligand>
        <name>substrate</name>
    </ligand>
</feature>
<feature type="binding site" evidence="1">
    <location>
        <position position="49"/>
    </location>
    <ligand>
        <name>ATP</name>
        <dbReference type="ChEBI" id="CHEBI:30616"/>
    </ligand>
</feature>
<feature type="binding site" evidence="1">
    <location>
        <position position="49"/>
    </location>
    <ligand>
        <name>Mg(2+)</name>
        <dbReference type="ChEBI" id="CHEBI:18420"/>
    </ligand>
</feature>
<feature type="binding site" evidence="1">
    <location>
        <begin position="108"/>
        <end position="111"/>
    </location>
    <ligand>
        <name>ATP</name>
        <dbReference type="ChEBI" id="CHEBI:30616"/>
    </ligand>
</feature>
<feature type="binding site" evidence="1">
    <location>
        <position position="108"/>
    </location>
    <ligand>
        <name>Mg(2+)</name>
        <dbReference type="ChEBI" id="CHEBI:18420"/>
    </ligand>
</feature>
<feature type="binding site" evidence="1">
    <location>
        <begin position="169"/>
        <end position="170"/>
    </location>
    <ligand>
        <name>ATP</name>
        <dbReference type="ChEBI" id="CHEBI:30616"/>
    </ligand>
</feature>
<feature type="binding site" evidence="1">
    <location>
        <begin position="197"/>
        <end position="199"/>
    </location>
    <ligand>
        <name>ATP</name>
        <dbReference type="ChEBI" id="CHEBI:30616"/>
    </ligand>
</feature>
<name>BIOD_MYCLB</name>
<proteinExistence type="inferred from homology"/>
<evidence type="ECO:0000255" key="1">
    <source>
        <dbReference type="HAMAP-Rule" id="MF_00336"/>
    </source>
</evidence>
<sequence>MTVVVVTGTDTGVGKTVACAALACHARQAGIEVAVCKPVQTGTQIGDDDLAEVARLSGVTELTGLVRYPQPLAPAAAAEHAGMALPTREQLLELIAGLDRPGRLILVEGAGGLLVELADASATLRDLAVELGALALVTVSVELGTLNHTALTLEALTTRGVACAGLVIGSWTGRPGAVQISNRSALARLAPMRATLPAGAGSMDATDFAAMSAAAFDRDWVTTLVH</sequence>